<protein>
    <recommendedName>
        <fullName evidence="1">Probable cell division protein WhiA</fullName>
    </recommendedName>
</protein>
<proteinExistence type="inferred from homology"/>
<feature type="chain" id="PRO_0000376585" description="Probable cell division protein WhiA">
    <location>
        <begin position="1"/>
        <end position="303"/>
    </location>
</feature>
<feature type="DNA-binding region" description="H-T-H motif" evidence="1">
    <location>
        <begin position="272"/>
        <end position="303"/>
    </location>
</feature>
<reference key="1">
    <citation type="journal article" date="2002" name="Proc. Natl. Acad. Sci. U.S.A.">
        <title>Genome sequence and comparative microarray analysis of serotype M18 group A Streptococcus strains associated with acute rheumatic fever outbreaks.</title>
        <authorList>
            <person name="Smoot J.C."/>
            <person name="Barbian K.D."/>
            <person name="Van Gompel J.J."/>
            <person name="Smoot L.M."/>
            <person name="Chaussee M.S."/>
            <person name="Sylva G.L."/>
            <person name="Sturdevant D.E."/>
            <person name="Ricklefs S.M."/>
            <person name="Porcella S.F."/>
            <person name="Parkins L.D."/>
            <person name="Beres S.B."/>
            <person name="Campbell D.S."/>
            <person name="Smith T.M."/>
            <person name="Zhang Q."/>
            <person name="Kapur V."/>
            <person name="Daly J.A."/>
            <person name="Veasy L.G."/>
            <person name="Musser J.M."/>
        </authorList>
    </citation>
    <scope>NUCLEOTIDE SEQUENCE [LARGE SCALE GENOMIC DNA]</scope>
    <source>
        <strain>MGAS8232</strain>
    </source>
</reference>
<organism>
    <name type="scientific">Streptococcus pyogenes serotype M18 (strain MGAS8232)</name>
    <dbReference type="NCBI Taxonomy" id="186103"/>
    <lineage>
        <taxon>Bacteria</taxon>
        <taxon>Bacillati</taxon>
        <taxon>Bacillota</taxon>
        <taxon>Bacilli</taxon>
        <taxon>Lactobacillales</taxon>
        <taxon>Streptococcaceae</taxon>
        <taxon>Streptococcus</taxon>
    </lineage>
</organism>
<dbReference type="EMBL" id="AE009949">
    <property type="protein sequence ID" value="AAL97386.1"/>
    <property type="molecule type" value="Genomic_DNA"/>
</dbReference>
<dbReference type="RefSeq" id="WP_011017562.1">
    <property type="nucleotide sequence ID" value="NC_003485.1"/>
</dbReference>
<dbReference type="SMR" id="Q8P1T6"/>
<dbReference type="KEGG" id="spm:spyM18_0715"/>
<dbReference type="HOGENOM" id="CLU_053282_0_0_9"/>
<dbReference type="GO" id="GO:0003677">
    <property type="term" value="F:DNA binding"/>
    <property type="evidence" value="ECO:0007669"/>
    <property type="project" value="UniProtKB-UniRule"/>
</dbReference>
<dbReference type="GO" id="GO:0051301">
    <property type="term" value="P:cell division"/>
    <property type="evidence" value="ECO:0007669"/>
    <property type="project" value="UniProtKB-UniRule"/>
</dbReference>
<dbReference type="GO" id="GO:0043937">
    <property type="term" value="P:regulation of sporulation"/>
    <property type="evidence" value="ECO:0007669"/>
    <property type="project" value="InterPro"/>
</dbReference>
<dbReference type="Gene3D" id="3.10.28.10">
    <property type="entry name" value="Homing endonucleases"/>
    <property type="match status" value="1"/>
</dbReference>
<dbReference type="HAMAP" id="MF_01420">
    <property type="entry name" value="HTH_type_WhiA"/>
    <property type="match status" value="1"/>
</dbReference>
<dbReference type="InterPro" id="IPR027434">
    <property type="entry name" value="Homing_endonucl"/>
</dbReference>
<dbReference type="InterPro" id="IPR018478">
    <property type="entry name" value="Sporu_reg_WhiA_N_dom"/>
</dbReference>
<dbReference type="InterPro" id="IPR003802">
    <property type="entry name" value="Sporulation_regulator_WhiA"/>
</dbReference>
<dbReference type="InterPro" id="IPR023054">
    <property type="entry name" value="Sporulation_regulator_WhiA_C"/>
</dbReference>
<dbReference type="InterPro" id="IPR039518">
    <property type="entry name" value="WhiA_LAGLIDADG_dom"/>
</dbReference>
<dbReference type="NCBIfam" id="TIGR00647">
    <property type="entry name" value="DNA_bind_WhiA"/>
    <property type="match status" value="1"/>
</dbReference>
<dbReference type="PANTHER" id="PTHR37307">
    <property type="entry name" value="CELL DIVISION PROTEIN WHIA-RELATED"/>
    <property type="match status" value="1"/>
</dbReference>
<dbReference type="PANTHER" id="PTHR37307:SF1">
    <property type="entry name" value="CELL DIVISION PROTEIN WHIA-RELATED"/>
    <property type="match status" value="1"/>
</dbReference>
<dbReference type="Pfam" id="PF02650">
    <property type="entry name" value="HTH_WhiA"/>
    <property type="match status" value="1"/>
</dbReference>
<dbReference type="Pfam" id="PF14527">
    <property type="entry name" value="LAGLIDADG_WhiA"/>
    <property type="match status" value="1"/>
</dbReference>
<dbReference type="Pfam" id="PF10298">
    <property type="entry name" value="WhiA_N"/>
    <property type="match status" value="1"/>
</dbReference>
<dbReference type="SUPFAM" id="SSF55608">
    <property type="entry name" value="Homing endonucleases"/>
    <property type="match status" value="1"/>
</dbReference>
<evidence type="ECO:0000255" key="1">
    <source>
        <dbReference type="HAMAP-Rule" id="MF_01420"/>
    </source>
</evidence>
<comment type="function">
    <text evidence="1">Involved in cell division and chromosome segregation.</text>
</comment>
<comment type="similarity">
    <text evidence="1">Belongs to the WhiA family.</text>
</comment>
<accession>Q8P1T6</accession>
<gene>
    <name evidence="1" type="primary">whiA</name>
    <name type="ordered locus">spyM18_0715</name>
</gene>
<sequence>MSFTTKVKEELIHLSTGDNNELAAIIKLSGSLGLAHQSLHLSITTENAKIARYIYSFIEDAYVIVPEIRYHQKTNLRKNRVYTVYVEQGVETILADLKLADSFFGLETGIEPQVLSDDNAGRSYLKGAFLTAGSIRDPESGKYQLEIYSVYLDHAQDLAQLMQKFMLDAKTIEHKSGAVTYLQKAEDIMDFLIIIGAMSCKEDFEAIKLLREARNDINRANNAETANIAKTISASMKTINNIIKIMDTIGLESLPIELQQVAQLRVKHPDYSIQQVADALEFPITKSGVNHRLRKINKIADDL</sequence>
<name>WHIA_STRP8</name>
<keyword id="KW-0131">Cell cycle</keyword>
<keyword id="KW-0132">Cell division</keyword>
<keyword id="KW-0238">DNA-binding</keyword>